<proteinExistence type="evidence at transcript level"/>
<organism>
    <name type="scientific">Mus musculus</name>
    <name type="common">Mouse</name>
    <dbReference type="NCBI Taxonomy" id="10090"/>
    <lineage>
        <taxon>Eukaryota</taxon>
        <taxon>Metazoa</taxon>
        <taxon>Chordata</taxon>
        <taxon>Craniata</taxon>
        <taxon>Vertebrata</taxon>
        <taxon>Euteleostomi</taxon>
        <taxon>Mammalia</taxon>
        <taxon>Eutheria</taxon>
        <taxon>Euarchontoglires</taxon>
        <taxon>Glires</taxon>
        <taxon>Rodentia</taxon>
        <taxon>Myomorpha</taxon>
        <taxon>Muroidea</taxon>
        <taxon>Muridae</taxon>
        <taxon>Murinae</taxon>
        <taxon>Mus</taxon>
        <taxon>Mus</taxon>
    </lineage>
</organism>
<sequence length="942" mass="103626">MTHRDSTGPVIGLKLVTLLFTLSPELLFLGAGLKLKENGYDGLLVAINPRVPEDLKLITNIKEMITEASFYLFNATKRRVFFRNVQILVPATWTDHNYSRVRQESYDKANVIVAEQSEEHGDDPYTLQHRGCGQEGRYIHFTPSFLLNDELAAGYGARGRVFVHEWAHLRWGVFDEYNNDKPFYVNGRNEIQVTRCSSDITGVFVCEKGLCPHEDCIISKIFREGCTFLYNSTQNATGSIMFMPSLPSVVEFCNESTHNQEAPNLQNQVCSLRSTWDVITASSDLNHSLPVHGVGLPAPPTFSLLQAGDRVVCLVIDVSRKMAEGDRLLRLQQAAELYLMQVVEAHTFVGIVTFDSKGEIRASLQQIYSDDDRKLLVSYLPTAVSTDAETNICAGVKKGFEVVEERNGRADGSVLILVTSGADEHIANCLLTSMNSGSTIHSMALGSSAARKVGELSRLTGGLKFFIPDKFTSNGMTEAFVRISSGTGDIFQQSLQVESVCETVQPQHQLADTMTVDSAVGNDTLFLVTWQTGGPPEIALLDPSGRKYNTGDFIINLAFRTASLKIPGTAKHGHWTYTLNNTHHSPQALKVTVASRASSLAMSPATLEAFVERDSTYFPQPVIIYANVRKGLHPILNATVVATVEPEAGDPVVLQLLDGGAGADVIRNDGIYSRYFSSFAVSGSYSLTVHVRHSPSTSTLALPVPGNHAMYVPGYITNDNIQMNAPKNLGHRPVKERWGFSRVSSGGSFSVLGVPDGPHPDMFPPCKITDLEAMKVEDDVVLSWTAPGEDFDQGQTTSYEIRMSRSLWNIRDDFDNAILVNSSELVPQHAGTRETFTFSPKLVTHELDHELAEDAQEPYIVYVALRAMDRSSLRSAVSNIALVSMSLPPNSSPVVSRDDLILKGVLTTVGLIAILCLIMVVAHCIFNRKKRPSRKENETKFL</sequence>
<reference key="1">
    <citation type="journal article" date="2004" name="J. Biol. Chem.">
        <title>Re-expression of detachment-inducible chloride channel mCLCA5 suppresses growth of metastatic breast cancer cells.</title>
        <authorList>
            <person name="Beckley J.R."/>
            <person name="Pauli B.U."/>
            <person name="Elble R.C."/>
        </authorList>
    </citation>
    <scope>NUCLEOTIDE SEQUENCE [MRNA] (ISOFORM 1)</scope>
    <scope>FUNCTION</scope>
    <scope>TISSUE SPECIFICITY</scope>
    <scope>INDUCTION</scope>
    <source>
        <strain>BALB/cJ</strain>
    </source>
</reference>
<reference key="2">
    <citation type="journal article" date="2004" name="J. Biol. Chem.">
        <title>Molecular and functional analyses of two new calcium-activated chloride channel family members from mouse eye and intestine.</title>
        <authorList>
            <person name="Evans S.R."/>
            <person name="Thoreson W.B."/>
            <person name="Beck C.L."/>
        </authorList>
    </citation>
    <scope>NUCLEOTIDE SEQUENCE [MRNA] (ISOFORM 1)</scope>
    <scope>FUNCTION</scope>
    <scope>SUBCELLULAR LOCATION</scope>
    <scope>TISSUE SPECIFICITY</scope>
    <source>
        <tissue>Eye</tissue>
    </source>
</reference>
<reference key="3">
    <citation type="journal article" date="2005" name="Science">
        <title>The transcriptional landscape of the mammalian genome.</title>
        <authorList>
            <person name="Carninci P."/>
            <person name="Kasukawa T."/>
            <person name="Katayama S."/>
            <person name="Gough J."/>
            <person name="Frith M.C."/>
            <person name="Maeda N."/>
            <person name="Oyama R."/>
            <person name="Ravasi T."/>
            <person name="Lenhard B."/>
            <person name="Wells C."/>
            <person name="Kodzius R."/>
            <person name="Shimokawa K."/>
            <person name="Bajic V.B."/>
            <person name="Brenner S.E."/>
            <person name="Batalov S."/>
            <person name="Forrest A.R."/>
            <person name="Zavolan M."/>
            <person name="Davis M.J."/>
            <person name="Wilming L.G."/>
            <person name="Aidinis V."/>
            <person name="Allen J.E."/>
            <person name="Ambesi-Impiombato A."/>
            <person name="Apweiler R."/>
            <person name="Aturaliya R.N."/>
            <person name="Bailey T.L."/>
            <person name="Bansal M."/>
            <person name="Baxter L."/>
            <person name="Beisel K.W."/>
            <person name="Bersano T."/>
            <person name="Bono H."/>
            <person name="Chalk A.M."/>
            <person name="Chiu K.P."/>
            <person name="Choudhary V."/>
            <person name="Christoffels A."/>
            <person name="Clutterbuck D.R."/>
            <person name="Crowe M.L."/>
            <person name="Dalla E."/>
            <person name="Dalrymple B.P."/>
            <person name="de Bono B."/>
            <person name="Della Gatta G."/>
            <person name="di Bernardo D."/>
            <person name="Down T."/>
            <person name="Engstrom P."/>
            <person name="Fagiolini M."/>
            <person name="Faulkner G."/>
            <person name="Fletcher C.F."/>
            <person name="Fukushima T."/>
            <person name="Furuno M."/>
            <person name="Futaki S."/>
            <person name="Gariboldi M."/>
            <person name="Georgii-Hemming P."/>
            <person name="Gingeras T.R."/>
            <person name="Gojobori T."/>
            <person name="Green R.E."/>
            <person name="Gustincich S."/>
            <person name="Harbers M."/>
            <person name="Hayashi Y."/>
            <person name="Hensch T.K."/>
            <person name="Hirokawa N."/>
            <person name="Hill D."/>
            <person name="Huminiecki L."/>
            <person name="Iacono M."/>
            <person name="Ikeo K."/>
            <person name="Iwama A."/>
            <person name="Ishikawa T."/>
            <person name="Jakt M."/>
            <person name="Kanapin A."/>
            <person name="Katoh M."/>
            <person name="Kawasawa Y."/>
            <person name="Kelso J."/>
            <person name="Kitamura H."/>
            <person name="Kitano H."/>
            <person name="Kollias G."/>
            <person name="Krishnan S.P."/>
            <person name="Kruger A."/>
            <person name="Kummerfeld S.K."/>
            <person name="Kurochkin I.V."/>
            <person name="Lareau L.F."/>
            <person name="Lazarevic D."/>
            <person name="Lipovich L."/>
            <person name="Liu J."/>
            <person name="Liuni S."/>
            <person name="McWilliam S."/>
            <person name="Madan Babu M."/>
            <person name="Madera M."/>
            <person name="Marchionni L."/>
            <person name="Matsuda H."/>
            <person name="Matsuzawa S."/>
            <person name="Miki H."/>
            <person name="Mignone F."/>
            <person name="Miyake S."/>
            <person name="Morris K."/>
            <person name="Mottagui-Tabar S."/>
            <person name="Mulder N."/>
            <person name="Nakano N."/>
            <person name="Nakauchi H."/>
            <person name="Ng P."/>
            <person name="Nilsson R."/>
            <person name="Nishiguchi S."/>
            <person name="Nishikawa S."/>
            <person name="Nori F."/>
            <person name="Ohara O."/>
            <person name="Okazaki Y."/>
            <person name="Orlando V."/>
            <person name="Pang K.C."/>
            <person name="Pavan W.J."/>
            <person name="Pavesi G."/>
            <person name="Pesole G."/>
            <person name="Petrovsky N."/>
            <person name="Piazza S."/>
            <person name="Reed J."/>
            <person name="Reid J.F."/>
            <person name="Ring B.Z."/>
            <person name="Ringwald M."/>
            <person name="Rost B."/>
            <person name="Ruan Y."/>
            <person name="Salzberg S.L."/>
            <person name="Sandelin A."/>
            <person name="Schneider C."/>
            <person name="Schoenbach C."/>
            <person name="Sekiguchi K."/>
            <person name="Semple C.A."/>
            <person name="Seno S."/>
            <person name="Sessa L."/>
            <person name="Sheng Y."/>
            <person name="Shibata Y."/>
            <person name="Shimada H."/>
            <person name="Shimada K."/>
            <person name="Silva D."/>
            <person name="Sinclair B."/>
            <person name="Sperling S."/>
            <person name="Stupka E."/>
            <person name="Sugiura K."/>
            <person name="Sultana R."/>
            <person name="Takenaka Y."/>
            <person name="Taki K."/>
            <person name="Tammoja K."/>
            <person name="Tan S.L."/>
            <person name="Tang S."/>
            <person name="Taylor M.S."/>
            <person name="Tegner J."/>
            <person name="Teichmann S.A."/>
            <person name="Ueda H.R."/>
            <person name="van Nimwegen E."/>
            <person name="Verardo R."/>
            <person name="Wei C.L."/>
            <person name="Yagi K."/>
            <person name="Yamanishi H."/>
            <person name="Zabarovsky E."/>
            <person name="Zhu S."/>
            <person name="Zimmer A."/>
            <person name="Hide W."/>
            <person name="Bult C."/>
            <person name="Grimmond S.M."/>
            <person name="Teasdale R.D."/>
            <person name="Liu E.T."/>
            <person name="Brusic V."/>
            <person name="Quackenbush J."/>
            <person name="Wahlestedt C."/>
            <person name="Mattick J.S."/>
            <person name="Hume D.A."/>
            <person name="Kai C."/>
            <person name="Sasaki D."/>
            <person name="Tomaru Y."/>
            <person name="Fukuda S."/>
            <person name="Kanamori-Katayama M."/>
            <person name="Suzuki M."/>
            <person name="Aoki J."/>
            <person name="Arakawa T."/>
            <person name="Iida J."/>
            <person name="Imamura K."/>
            <person name="Itoh M."/>
            <person name="Kato T."/>
            <person name="Kawaji H."/>
            <person name="Kawagashira N."/>
            <person name="Kawashima T."/>
            <person name="Kojima M."/>
            <person name="Kondo S."/>
            <person name="Konno H."/>
            <person name="Nakano K."/>
            <person name="Ninomiya N."/>
            <person name="Nishio T."/>
            <person name="Okada M."/>
            <person name="Plessy C."/>
            <person name="Shibata K."/>
            <person name="Shiraki T."/>
            <person name="Suzuki S."/>
            <person name="Tagami M."/>
            <person name="Waki K."/>
            <person name="Watahiki A."/>
            <person name="Okamura-Oho Y."/>
            <person name="Suzuki H."/>
            <person name="Kawai J."/>
            <person name="Hayashizaki Y."/>
        </authorList>
    </citation>
    <scope>NUCLEOTIDE SEQUENCE [LARGE SCALE MRNA] (ISOFORMS 1 AND 2)</scope>
    <source>
        <strain>C57BL/6J</strain>
        <tissue>Head</tissue>
        <tissue>Skin</tissue>
    </source>
</reference>
<reference key="4">
    <citation type="journal article" date="2004" name="Genome Res.">
        <title>The status, quality, and expansion of the NIH full-length cDNA project: the Mammalian Gene Collection (MGC).</title>
        <authorList>
            <consortium name="The MGC Project Team"/>
        </authorList>
    </citation>
    <scope>NUCLEOTIDE SEQUENCE [LARGE SCALE MRNA] (ISOFORM 1)</scope>
    <source>
        <strain>129</strain>
        <tissue>Mammary tumor</tissue>
    </source>
</reference>
<gene>
    <name type="primary">Clca2</name>
    <name type="synonym">Clca5</name>
</gene>
<comment type="function">
    <text evidence="5 6">Plays a role in modulating chloride current across the plasma membrane in a calcium-dependent manner, and cell adhesion. Involved in basal cell adhesion and/or stratification of squamous epithelia. May act as a tumor suppressor in breast and colorectal cancer. Plays a key role for cell adhesion in the beginning stages of lung metastasis via the binding to ITGB4.</text>
</comment>
<comment type="subcellular location">
    <subcellularLocation>
        <location evidence="5">Cell membrane</location>
        <topology evidence="5">Single-pass type I membrane protein</topology>
    </subcellularLocation>
    <subcellularLocation>
        <location evidence="5">Basal cell membrane</location>
        <topology evidence="5">Single-pass type I membrane protein</topology>
    </subcellularLocation>
    <subcellularLocation>
        <location evidence="5">Cell junction</location>
    </subcellularLocation>
</comment>
<comment type="alternative products">
    <event type="alternative splicing"/>
    <isoform>
        <id>Q8BG22-1</id>
        <name>1</name>
        <sequence type="displayed"/>
    </isoform>
    <isoform>
        <id>Q8BG22-2</id>
        <name>2</name>
        <sequence type="described" ref="VSP_033515"/>
    </isoform>
</comment>
<comment type="tissue specificity">
    <text evidence="5 6">Highly expressed in eye, spleen, lung, kidney, uterus, and endothelial cells. Weakly expressed in heart and throughout the gastrointestinal tract. Highly expressed in mammary cell lines. Its expression in immortalized cell line HC11 correlates with slow or arrested growth. Re-expression in mammary tumor cells reduces colony survival.</text>
</comment>
<comment type="induction">
    <text evidence="6">By 30-fold when cells are deprived of growth factors or anchorage in mammary epithelial cell. Down-regulated in metastatic mammary tumor cell lines.</text>
</comment>
<comment type="domain">
    <text evidence="2">The metalloprotease region is responsible for autoproteolytic processing. It can also cross-cleave other CLCA substrates.</text>
</comment>
<comment type="PTM">
    <text evidence="2">The translation product is autoproteolytically cleaved by the metalloprotease domain in the endoplasmic reticulum into a N-terminal and a C-terminal products that remain physically associated with each other. The cleavage is necessary for calcium-activated chloride channel (CaCC) activation activity.</text>
</comment>
<comment type="PTM">
    <text evidence="1">N-glycosylated.</text>
</comment>
<comment type="similarity">
    <text evidence="8">Belongs to the CLCR family.</text>
</comment>
<protein>
    <recommendedName>
        <fullName>Calcium-activated chloride channel regulator 2</fullName>
        <ecNumber evidence="2">3.4.-.-</ecNumber>
    </recommendedName>
    <alternativeName>
        <fullName>Calcium-activated chloride channel family member 5</fullName>
        <shortName>mCLCA5</shortName>
    </alternativeName>
</protein>
<dbReference type="EC" id="3.4.-.-" evidence="2"/>
<dbReference type="EMBL" id="AY161007">
    <property type="protein sequence ID" value="AAO18366.1"/>
    <property type="molecule type" value="mRNA"/>
</dbReference>
<dbReference type="EMBL" id="AK028704">
    <property type="protein sequence ID" value="BAC26076.1"/>
    <property type="molecule type" value="mRNA"/>
</dbReference>
<dbReference type="EMBL" id="AK035512">
    <property type="protein sequence ID" value="BAC29086.1"/>
    <property type="molecule type" value="mRNA"/>
</dbReference>
<dbReference type="EMBL" id="AK048276">
    <property type="protein sequence ID" value="BAC33291.1"/>
    <property type="molecule type" value="mRNA"/>
</dbReference>
<dbReference type="EMBL" id="BC096379">
    <property type="protein sequence ID" value="AAH96379.1"/>
    <property type="molecule type" value="mRNA"/>
</dbReference>
<dbReference type="CCDS" id="CCDS17890.1">
    <molecule id="Q8BG22-1"/>
</dbReference>
<dbReference type="RefSeq" id="NP_001396721.1">
    <molecule id="Q8BG22-2"/>
    <property type="nucleotide sequence ID" value="NM_001409792.1"/>
</dbReference>
<dbReference type="RefSeq" id="NP_848812.1">
    <molecule id="Q8BG22-1"/>
    <property type="nucleotide sequence ID" value="NM_178697.6"/>
</dbReference>
<dbReference type="RefSeq" id="XP_006501498.1">
    <property type="nucleotide sequence ID" value="XM_006501435.1"/>
</dbReference>
<dbReference type="SMR" id="Q8BG22"/>
<dbReference type="FunCoup" id="Q8BG22">
    <property type="interactions" value="290"/>
</dbReference>
<dbReference type="STRING" id="10090.ENSMUSP00000036029"/>
<dbReference type="GlyCosmos" id="Q8BG22">
    <property type="glycosylation" value="10 sites, No reported glycans"/>
</dbReference>
<dbReference type="GlyGen" id="Q8BG22">
    <property type="glycosylation" value="10 sites"/>
</dbReference>
<dbReference type="PhosphoSitePlus" id="Q8BG22"/>
<dbReference type="PaxDb" id="10090-ENSMUSP00000036029"/>
<dbReference type="ProteomicsDB" id="285471">
    <molecule id="Q8BG22-1"/>
</dbReference>
<dbReference type="ProteomicsDB" id="285472">
    <molecule id="Q8BG22-2"/>
</dbReference>
<dbReference type="Antibodypedia" id="33584">
    <property type="antibodies" value="92 antibodies from 20 providers"/>
</dbReference>
<dbReference type="DNASU" id="229933"/>
<dbReference type="Ensembl" id="ENSMUST00000040465.11">
    <molecule id="Q8BG22-1"/>
    <property type="protein sequence ID" value="ENSMUSP00000036029.7"/>
    <property type="gene ID" value="ENSMUSG00000036960.11"/>
</dbReference>
<dbReference type="Ensembl" id="ENSMUST00000198993.2">
    <molecule id="Q8BG22-2"/>
    <property type="protein sequence ID" value="ENSMUSP00000143161.2"/>
    <property type="gene ID" value="ENSMUSG00000036960.11"/>
</dbReference>
<dbReference type="GeneID" id="229933"/>
<dbReference type="KEGG" id="mmu:229933"/>
<dbReference type="UCSC" id="uc008rqg.1">
    <molecule id="Q8BG22-1"/>
    <property type="organism name" value="mouse"/>
</dbReference>
<dbReference type="AGR" id="MGI:2139758"/>
<dbReference type="CTD" id="9635"/>
<dbReference type="MGI" id="MGI:2139758">
    <property type="gene designation" value="Clca2"/>
</dbReference>
<dbReference type="VEuPathDB" id="HostDB:ENSMUSG00000036960"/>
<dbReference type="eggNOG" id="ENOG502RIMV">
    <property type="taxonomic scope" value="Eukaryota"/>
</dbReference>
<dbReference type="GeneTree" id="ENSGT00940000161548"/>
<dbReference type="InParanoid" id="Q8BG22"/>
<dbReference type="OMA" id="GPICNLK"/>
<dbReference type="OrthoDB" id="687730at2759"/>
<dbReference type="PhylomeDB" id="Q8BG22"/>
<dbReference type="TreeFam" id="TF328396"/>
<dbReference type="Reactome" id="R-MMU-2672351">
    <property type="pathway name" value="Stimuli-sensing channels"/>
</dbReference>
<dbReference type="BioGRID-ORCS" id="229933">
    <property type="hits" value="2 hits in 79 CRISPR screens"/>
</dbReference>
<dbReference type="PRO" id="PR:Q8BG22"/>
<dbReference type="Proteomes" id="UP000000589">
    <property type="component" value="Chromosome 3"/>
</dbReference>
<dbReference type="RNAct" id="Q8BG22">
    <property type="molecule type" value="protein"/>
</dbReference>
<dbReference type="Bgee" id="ENSMUSG00000036960">
    <property type="expression patterns" value="Expressed in skin of external ear and 62 other cell types or tissues"/>
</dbReference>
<dbReference type="GO" id="GO:0070161">
    <property type="term" value="C:anchoring junction"/>
    <property type="evidence" value="ECO:0007669"/>
    <property type="project" value="UniProtKB-SubCell"/>
</dbReference>
<dbReference type="GO" id="GO:0009925">
    <property type="term" value="C:basal plasma membrane"/>
    <property type="evidence" value="ECO:0007669"/>
    <property type="project" value="UniProtKB-SubCell"/>
</dbReference>
<dbReference type="GO" id="GO:0005829">
    <property type="term" value="C:cytosol"/>
    <property type="evidence" value="ECO:0007669"/>
    <property type="project" value="Ensembl"/>
</dbReference>
<dbReference type="GO" id="GO:0031965">
    <property type="term" value="C:nuclear membrane"/>
    <property type="evidence" value="ECO:0007669"/>
    <property type="project" value="Ensembl"/>
</dbReference>
<dbReference type="GO" id="GO:0005654">
    <property type="term" value="C:nucleoplasm"/>
    <property type="evidence" value="ECO:0007669"/>
    <property type="project" value="Ensembl"/>
</dbReference>
<dbReference type="GO" id="GO:0005886">
    <property type="term" value="C:plasma membrane"/>
    <property type="evidence" value="ECO:0000314"/>
    <property type="project" value="MGI"/>
</dbReference>
<dbReference type="GO" id="GO:0005254">
    <property type="term" value="F:chloride channel activity"/>
    <property type="evidence" value="ECO:0000314"/>
    <property type="project" value="MGI"/>
</dbReference>
<dbReference type="GO" id="GO:0005229">
    <property type="term" value="F:intracellularly calcium-gated chloride channel activity"/>
    <property type="evidence" value="ECO:0007669"/>
    <property type="project" value="InterPro"/>
</dbReference>
<dbReference type="GO" id="GO:0015276">
    <property type="term" value="F:ligand-gated monoatomic ion channel activity"/>
    <property type="evidence" value="ECO:0000314"/>
    <property type="project" value="MGI"/>
</dbReference>
<dbReference type="GO" id="GO:0046872">
    <property type="term" value="F:metal ion binding"/>
    <property type="evidence" value="ECO:0007669"/>
    <property type="project" value="UniProtKB-KW"/>
</dbReference>
<dbReference type="GO" id="GO:0008237">
    <property type="term" value="F:metallopeptidase activity"/>
    <property type="evidence" value="ECO:0007669"/>
    <property type="project" value="UniProtKB-KW"/>
</dbReference>
<dbReference type="GO" id="GO:0007155">
    <property type="term" value="P:cell adhesion"/>
    <property type="evidence" value="ECO:0007669"/>
    <property type="project" value="UniProtKB-KW"/>
</dbReference>
<dbReference type="GO" id="GO:0006821">
    <property type="term" value="P:chloride transport"/>
    <property type="evidence" value="ECO:0000315"/>
    <property type="project" value="MGI"/>
</dbReference>
<dbReference type="GO" id="GO:0006508">
    <property type="term" value="P:proteolysis"/>
    <property type="evidence" value="ECO:0007669"/>
    <property type="project" value="UniProtKB-KW"/>
</dbReference>
<dbReference type="CDD" id="cd00198">
    <property type="entry name" value="vWFA"/>
    <property type="match status" value="1"/>
</dbReference>
<dbReference type="FunFam" id="3.40.50.410:FF:000059">
    <property type="entry name" value="Calcium-activated chloride channel regulator 2"/>
    <property type="match status" value="1"/>
</dbReference>
<dbReference type="Gene3D" id="3.40.50.410">
    <property type="entry name" value="von Willebrand factor, type A domain"/>
    <property type="match status" value="1"/>
</dbReference>
<dbReference type="InterPro" id="IPR004727">
    <property type="entry name" value="CLCA_chordata"/>
</dbReference>
<dbReference type="InterPro" id="IPR013642">
    <property type="entry name" value="CLCA_N"/>
</dbReference>
<dbReference type="InterPro" id="IPR051266">
    <property type="entry name" value="CLCR"/>
</dbReference>
<dbReference type="InterPro" id="IPR002035">
    <property type="entry name" value="VWF_A"/>
</dbReference>
<dbReference type="InterPro" id="IPR036465">
    <property type="entry name" value="vWFA_dom_sf"/>
</dbReference>
<dbReference type="NCBIfam" id="TIGR00868">
    <property type="entry name" value="hCaCC"/>
    <property type="match status" value="1"/>
</dbReference>
<dbReference type="PANTHER" id="PTHR10579">
    <property type="entry name" value="CALCIUM-ACTIVATED CHLORIDE CHANNEL REGULATOR"/>
    <property type="match status" value="1"/>
</dbReference>
<dbReference type="PANTHER" id="PTHR10579:SF66">
    <property type="entry name" value="CALCIUM-ACTIVATED CHLORIDE CHANNEL REGULATOR 2"/>
    <property type="match status" value="1"/>
</dbReference>
<dbReference type="Pfam" id="PF08434">
    <property type="entry name" value="CLCA"/>
    <property type="match status" value="1"/>
</dbReference>
<dbReference type="Pfam" id="PF13519">
    <property type="entry name" value="VWA_2"/>
    <property type="match status" value="1"/>
</dbReference>
<dbReference type="SMART" id="SM00327">
    <property type="entry name" value="VWA"/>
    <property type="match status" value="1"/>
</dbReference>
<dbReference type="SUPFAM" id="SSF53300">
    <property type="entry name" value="vWA-like"/>
    <property type="match status" value="1"/>
</dbReference>
<dbReference type="PROSITE" id="PS50234">
    <property type="entry name" value="VWFA"/>
    <property type="match status" value="1"/>
</dbReference>
<accession>Q8BG22</accession>
<accession>Q8BZF7</accession>
<feature type="signal peptide" evidence="3">
    <location>
        <begin position="1"/>
        <end position="32"/>
    </location>
</feature>
<feature type="chain" id="PRO_0000333696" description="Calcium-activated chloride channel regulator 2">
    <location>
        <begin position="33"/>
        <end position="942"/>
    </location>
</feature>
<feature type="topological domain" description="Extracellular" evidence="3">
    <location>
        <begin position="33"/>
        <end position="905"/>
    </location>
</feature>
<feature type="transmembrane region" description="Helical" evidence="3">
    <location>
        <begin position="906"/>
        <end position="926"/>
    </location>
</feature>
<feature type="topological domain" description="Cytoplasmic" evidence="3">
    <location>
        <begin position="927"/>
        <end position="942"/>
    </location>
</feature>
<feature type="domain" description="VWFA" evidence="4">
    <location>
        <begin position="311"/>
        <end position="483"/>
    </location>
</feature>
<feature type="region of interest" description="Metalloprotease domain" evidence="2">
    <location>
        <begin position="54"/>
        <end position="205"/>
    </location>
</feature>
<feature type="active site" evidence="2">
    <location>
        <position position="165"/>
    </location>
</feature>
<feature type="binding site" evidence="2">
    <location>
        <position position="164"/>
    </location>
    <ligand>
        <name>Zn(2+)</name>
        <dbReference type="ChEBI" id="CHEBI:29105"/>
        <note>catalytic</note>
    </ligand>
</feature>
<feature type="binding site" evidence="2">
    <location>
        <position position="168"/>
    </location>
    <ligand>
        <name>Zn(2+)</name>
        <dbReference type="ChEBI" id="CHEBI:29105"/>
        <note>catalytic</note>
    </ligand>
</feature>
<feature type="binding site" evidence="2">
    <location>
        <position position="175"/>
    </location>
    <ligand>
        <name>Zn(2+)</name>
        <dbReference type="ChEBI" id="CHEBI:29105"/>
        <note>catalytic</note>
    </ligand>
</feature>
<feature type="site" description="Cleavage; by autolysis" evidence="2">
    <location>
        <begin position="708"/>
        <end position="709"/>
    </location>
</feature>
<feature type="glycosylation site" description="N-linked (GlcNAc...) asparagine" evidence="3">
    <location>
        <position position="74"/>
    </location>
</feature>
<feature type="glycosylation site" description="N-linked (GlcNAc...) asparagine" evidence="3">
    <location>
        <position position="97"/>
    </location>
</feature>
<feature type="glycosylation site" description="N-linked (GlcNAc...) asparagine" evidence="3">
    <location>
        <position position="231"/>
    </location>
</feature>
<feature type="glycosylation site" description="N-linked (GlcNAc...) asparagine" evidence="3">
    <location>
        <position position="235"/>
    </location>
</feature>
<feature type="glycosylation site" description="N-linked (GlcNAc...) asparagine" evidence="3">
    <location>
        <position position="254"/>
    </location>
</feature>
<feature type="glycosylation site" description="N-linked (GlcNAc...) asparagine" evidence="3">
    <location>
        <position position="286"/>
    </location>
</feature>
<feature type="glycosylation site" description="N-linked (GlcNAc...) asparagine" evidence="3">
    <location>
        <position position="522"/>
    </location>
</feature>
<feature type="glycosylation site" description="N-linked (GlcNAc...) asparagine" evidence="3">
    <location>
        <position position="580"/>
    </location>
</feature>
<feature type="glycosylation site" description="N-linked (GlcNAc...) asparagine" evidence="3">
    <location>
        <position position="637"/>
    </location>
</feature>
<feature type="glycosylation site" description="N-linked (GlcNAc...) asparagine" evidence="3">
    <location>
        <position position="821"/>
    </location>
</feature>
<feature type="splice variant" id="VSP_033515" description="In isoform 2." evidence="7">
    <location>
        <begin position="675"/>
        <end position="942"/>
    </location>
</feature>
<evidence type="ECO:0000250" key="1"/>
<evidence type="ECO:0000250" key="2">
    <source>
        <dbReference type="UniProtKB" id="A8K7I4"/>
    </source>
</evidence>
<evidence type="ECO:0000255" key="3"/>
<evidence type="ECO:0000255" key="4">
    <source>
        <dbReference type="PROSITE-ProRule" id="PRU00219"/>
    </source>
</evidence>
<evidence type="ECO:0000269" key="5">
    <source>
    </source>
</evidence>
<evidence type="ECO:0000269" key="6">
    <source>
    </source>
</evidence>
<evidence type="ECO:0000303" key="7">
    <source>
    </source>
</evidence>
<evidence type="ECO:0000305" key="8"/>
<name>CLCA2_MOUSE</name>
<keyword id="KW-0025">Alternative splicing</keyword>
<keyword id="KW-0068">Autocatalytic cleavage</keyword>
<keyword id="KW-0106">Calcium</keyword>
<keyword id="KW-0130">Cell adhesion</keyword>
<keyword id="KW-0965">Cell junction</keyword>
<keyword id="KW-1003">Cell membrane</keyword>
<keyword id="KW-0868">Chloride</keyword>
<keyword id="KW-0325">Glycoprotein</keyword>
<keyword id="KW-0378">Hydrolase</keyword>
<keyword id="KW-0406">Ion transport</keyword>
<keyword id="KW-0472">Membrane</keyword>
<keyword id="KW-0479">Metal-binding</keyword>
<keyword id="KW-0482">Metalloprotease</keyword>
<keyword id="KW-0645">Protease</keyword>
<keyword id="KW-1185">Reference proteome</keyword>
<keyword id="KW-0732">Signal</keyword>
<keyword id="KW-0812">Transmembrane</keyword>
<keyword id="KW-1133">Transmembrane helix</keyword>
<keyword id="KW-0813">Transport</keyword>
<keyword id="KW-0862">Zinc</keyword>